<keyword id="KW-0093">Biotin biosynthesis</keyword>
<keyword id="KW-0663">Pyridoxal phosphate</keyword>
<keyword id="KW-0808">Transferase</keyword>
<proteinExistence type="inferred from homology"/>
<dbReference type="EC" id="2.3.1.47" evidence="1"/>
<dbReference type="EMBL" id="CP000958">
    <property type="protein sequence ID" value="ACA92105.1"/>
    <property type="molecule type" value="Genomic_DNA"/>
</dbReference>
<dbReference type="RefSeq" id="WP_012329324.1">
    <property type="nucleotide sequence ID" value="NC_010508.1"/>
</dbReference>
<dbReference type="SMR" id="B1JZD9"/>
<dbReference type="GeneID" id="83049727"/>
<dbReference type="KEGG" id="bcm:Bcenmc03_2947"/>
<dbReference type="HOGENOM" id="CLU_015846_11_2_4"/>
<dbReference type="UniPathway" id="UPA00078"/>
<dbReference type="Proteomes" id="UP000002169">
    <property type="component" value="Chromosome 1"/>
</dbReference>
<dbReference type="GO" id="GO:0008710">
    <property type="term" value="F:8-amino-7-oxononanoate synthase activity"/>
    <property type="evidence" value="ECO:0007669"/>
    <property type="project" value="UniProtKB-UniRule"/>
</dbReference>
<dbReference type="GO" id="GO:0030170">
    <property type="term" value="F:pyridoxal phosphate binding"/>
    <property type="evidence" value="ECO:0007669"/>
    <property type="project" value="UniProtKB-UniRule"/>
</dbReference>
<dbReference type="GO" id="GO:0009102">
    <property type="term" value="P:biotin biosynthetic process"/>
    <property type="evidence" value="ECO:0007669"/>
    <property type="project" value="UniProtKB-UniRule"/>
</dbReference>
<dbReference type="Gene3D" id="3.90.1150.10">
    <property type="entry name" value="Aspartate Aminotransferase, domain 1"/>
    <property type="match status" value="1"/>
</dbReference>
<dbReference type="Gene3D" id="3.40.640.10">
    <property type="entry name" value="Type I PLP-dependent aspartate aminotransferase-like (Major domain)"/>
    <property type="match status" value="1"/>
</dbReference>
<dbReference type="HAMAP" id="MF_01693">
    <property type="entry name" value="BioF_aminotrans_2"/>
    <property type="match status" value="1"/>
</dbReference>
<dbReference type="InterPro" id="IPR004839">
    <property type="entry name" value="Aminotransferase_I/II_large"/>
</dbReference>
<dbReference type="InterPro" id="IPR050087">
    <property type="entry name" value="AON_synthase_class-II"/>
</dbReference>
<dbReference type="InterPro" id="IPR004723">
    <property type="entry name" value="AONS_Archaea/Proteobacteria"/>
</dbReference>
<dbReference type="InterPro" id="IPR022834">
    <property type="entry name" value="AONS_Proteobacteria"/>
</dbReference>
<dbReference type="InterPro" id="IPR015424">
    <property type="entry name" value="PyrdxlP-dep_Trfase"/>
</dbReference>
<dbReference type="InterPro" id="IPR015421">
    <property type="entry name" value="PyrdxlP-dep_Trfase_major"/>
</dbReference>
<dbReference type="InterPro" id="IPR015422">
    <property type="entry name" value="PyrdxlP-dep_Trfase_small"/>
</dbReference>
<dbReference type="NCBIfam" id="TIGR00858">
    <property type="entry name" value="bioF"/>
    <property type="match status" value="1"/>
</dbReference>
<dbReference type="PANTHER" id="PTHR13693:SF100">
    <property type="entry name" value="8-AMINO-7-OXONONANOATE SYNTHASE"/>
    <property type="match status" value="1"/>
</dbReference>
<dbReference type="PANTHER" id="PTHR13693">
    <property type="entry name" value="CLASS II AMINOTRANSFERASE/8-AMINO-7-OXONONANOATE SYNTHASE"/>
    <property type="match status" value="1"/>
</dbReference>
<dbReference type="Pfam" id="PF00155">
    <property type="entry name" value="Aminotran_1_2"/>
    <property type="match status" value="1"/>
</dbReference>
<dbReference type="SUPFAM" id="SSF53383">
    <property type="entry name" value="PLP-dependent transferases"/>
    <property type="match status" value="1"/>
</dbReference>
<gene>
    <name evidence="1" type="primary">bioF</name>
    <name type="ordered locus">Bcenmc03_2947</name>
</gene>
<protein>
    <recommendedName>
        <fullName evidence="1">8-amino-7-oxononanoate synthase</fullName>
        <shortName evidence="1">AONS</shortName>
        <ecNumber evidence="1">2.3.1.47</ecNumber>
    </recommendedName>
    <alternativeName>
        <fullName evidence="1">7-keto-8-amino-pelargonic acid synthase</fullName>
        <shortName evidence="1">7-KAP synthase</shortName>
        <shortName evidence="1">KAPA synthase</shortName>
    </alternativeName>
    <alternativeName>
        <fullName evidence="1">8-amino-7-ketopelargonate synthase</fullName>
    </alternativeName>
</protein>
<accession>B1JZD9</accession>
<name>BIOF_BURO0</name>
<organism>
    <name type="scientific">Burkholderia orbicola (strain MC0-3)</name>
    <dbReference type="NCBI Taxonomy" id="406425"/>
    <lineage>
        <taxon>Bacteria</taxon>
        <taxon>Pseudomonadati</taxon>
        <taxon>Pseudomonadota</taxon>
        <taxon>Betaproteobacteria</taxon>
        <taxon>Burkholderiales</taxon>
        <taxon>Burkholderiaceae</taxon>
        <taxon>Burkholderia</taxon>
        <taxon>Burkholderia cepacia complex</taxon>
        <taxon>Burkholderia orbicola</taxon>
    </lineage>
</organism>
<comment type="function">
    <text evidence="1">Catalyzes the decarboxylative condensation of pimeloyl-[acyl-carrier protein] and L-alanine to produce 8-amino-7-oxononanoate (AON), [acyl-carrier protein], and carbon dioxide.</text>
</comment>
<comment type="catalytic activity">
    <reaction evidence="1">
        <text>6-carboxyhexanoyl-[ACP] + L-alanine + H(+) = (8S)-8-amino-7-oxononanoate + holo-[ACP] + CO2</text>
        <dbReference type="Rhea" id="RHEA:42288"/>
        <dbReference type="Rhea" id="RHEA-COMP:9685"/>
        <dbReference type="Rhea" id="RHEA-COMP:9955"/>
        <dbReference type="ChEBI" id="CHEBI:15378"/>
        <dbReference type="ChEBI" id="CHEBI:16526"/>
        <dbReference type="ChEBI" id="CHEBI:57972"/>
        <dbReference type="ChEBI" id="CHEBI:64479"/>
        <dbReference type="ChEBI" id="CHEBI:78846"/>
        <dbReference type="ChEBI" id="CHEBI:149468"/>
        <dbReference type="EC" id="2.3.1.47"/>
    </reaction>
</comment>
<comment type="cofactor">
    <cofactor evidence="1">
        <name>pyridoxal 5'-phosphate</name>
        <dbReference type="ChEBI" id="CHEBI:597326"/>
    </cofactor>
</comment>
<comment type="pathway">
    <text evidence="1">Cofactor biosynthesis; biotin biosynthesis.</text>
</comment>
<comment type="subunit">
    <text evidence="1">Homodimer.</text>
</comment>
<comment type="similarity">
    <text evidence="1">Belongs to the class-II pyridoxal-phosphate-dependent aminotransferase family. BioF subfamily.</text>
</comment>
<evidence type="ECO:0000255" key="1">
    <source>
        <dbReference type="HAMAP-Rule" id="MF_01693"/>
    </source>
</evidence>
<feature type="chain" id="PRO_0000380929" description="8-amino-7-oxononanoate synthase">
    <location>
        <begin position="1"/>
        <end position="406"/>
    </location>
</feature>
<feature type="binding site" evidence="1">
    <location>
        <position position="21"/>
    </location>
    <ligand>
        <name>substrate</name>
    </ligand>
</feature>
<feature type="binding site" evidence="1">
    <location>
        <begin position="112"/>
        <end position="113"/>
    </location>
    <ligand>
        <name>pyridoxal 5'-phosphate</name>
        <dbReference type="ChEBI" id="CHEBI:597326"/>
    </ligand>
</feature>
<feature type="binding site" evidence="1">
    <location>
        <position position="137"/>
    </location>
    <ligand>
        <name>substrate</name>
    </ligand>
</feature>
<feature type="binding site" evidence="1">
    <location>
        <position position="183"/>
    </location>
    <ligand>
        <name>pyridoxal 5'-phosphate</name>
        <dbReference type="ChEBI" id="CHEBI:597326"/>
    </ligand>
</feature>
<feature type="binding site" evidence="1">
    <location>
        <position position="211"/>
    </location>
    <ligand>
        <name>pyridoxal 5'-phosphate</name>
        <dbReference type="ChEBI" id="CHEBI:597326"/>
    </ligand>
</feature>
<feature type="binding site" evidence="1">
    <location>
        <position position="239"/>
    </location>
    <ligand>
        <name>pyridoxal 5'-phosphate</name>
        <dbReference type="ChEBI" id="CHEBI:597326"/>
    </ligand>
</feature>
<feature type="binding site" evidence="1">
    <location>
        <position position="358"/>
    </location>
    <ligand>
        <name>substrate</name>
    </ligand>
</feature>
<feature type="modified residue" description="N6-(pyridoxal phosphate)lysine" evidence="1">
    <location>
        <position position="242"/>
    </location>
</feature>
<reference key="1">
    <citation type="submission" date="2008-02" db="EMBL/GenBank/DDBJ databases">
        <title>Complete sequence of chromosome 1 of Burkholderia cenocepacia MC0-3.</title>
        <authorList>
            <person name="Copeland A."/>
            <person name="Lucas S."/>
            <person name="Lapidus A."/>
            <person name="Barry K."/>
            <person name="Bruce D."/>
            <person name="Goodwin L."/>
            <person name="Glavina del Rio T."/>
            <person name="Dalin E."/>
            <person name="Tice H."/>
            <person name="Pitluck S."/>
            <person name="Chain P."/>
            <person name="Malfatti S."/>
            <person name="Shin M."/>
            <person name="Vergez L."/>
            <person name="Schmutz J."/>
            <person name="Larimer F."/>
            <person name="Land M."/>
            <person name="Hauser L."/>
            <person name="Kyrpides N."/>
            <person name="Mikhailova N."/>
            <person name="Tiedje J."/>
            <person name="Richardson P."/>
        </authorList>
    </citation>
    <scope>NUCLEOTIDE SEQUENCE [LARGE SCALE GENOMIC DNA]</scope>
    <source>
        <strain>MC0-3</strain>
    </source>
</reference>
<sequence length="406" mass="42057">MSLLDTLQRGLADLDAQGLRRVRRIAYTACDAHMTVNGREIVGFASNDYLGLAAHPALVAAFAEGAQRYGSGSGGSHLLGGHSRAHARLEDELAGFAGGFSDAPRALYFSTGYMANLAAMTALAGKGATIFSDALNHASLIDGMRLSRANVQVYPHADTAALAALLDASAAETKLIVSDTVFSMDGDIAPLTELVALAERHGAWLVVDDAHGFGVLGPQGRGALAAAALRSPHLVYVGTLGKAAGVAGAFVIAHETVIEWLIQRARSYIFTTAAPPAVAHAVSASLKVIAGDEGDARRAHLAALIERTRALLRNTRWQPVDSHTAVQPLVIGSNDATLAAMRALDAHGLWVPAIRPPTVPAGTSRLRVSLSAAHSFDDLARLEAALIEASEAAAASVGAARQEAAA</sequence>